<dbReference type="EMBL" id="AY082613">
    <property type="protein sequence ID" value="AAL99202.1"/>
    <property type="molecule type" value="mRNA"/>
</dbReference>
<dbReference type="EMBL" id="U38981">
    <property type="protein sequence ID" value="AAA81518.1"/>
    <property type="molecule type" value="mRNA"/>
</dbReference>
<dbReference type="EMBL" id="AK002397">
    <property type="protein sequence ID" value="BAB22069.1"/>
    <property type="molecule type" value="mRNA"/>
</dbReference>
<dbReference type="EMBL" id="AK139942">
    <property type="protein sequence ID" value="BAE24189.1"/>
    <property type="molecule type" value="mRNA"/>
</dbReference>
<dbReference type="EMBL" id="AL591177">
    <property type="protein sequence ID" value="CAI25553.1"/>
    <property type="status" value="ALT_SEQ"/>
    <property type="molecule type" value="Genomic_DNA"/>
</dbReference>
<dbReference type="EMBL" id="AL591177">
    <property type="protein sequence ID" value="CAI25554.1"/>
    <property type="molecule type" value="Genomic_DNA"/>
</dbReference>
<dbReference type="EMBL" id="BC002040">
    <property type="protein sequence ID" value="AAH02040.1"/>
    <property type="molecule type" value="mRNA"/>
</dbReference>
<dbReference type="CCDS" id="CCDS25111.1">
    <molecule id="Q61025-1"/>
</dbReference>
<dbReference type="RefSeq" id="NP_061342.1">
    <molecule id="Q61025-1"/>
    <property type="nucleotide sequence ID" value="NM_018854.5"/>
</dbReference>
<dbReference type="SMR" id="Q61025"/>
<dbReference type="BioGRID" id="207750">
    <property type="interactions" value="8"/>
</dbReference>
<dbReference type="ComplexPortal" id="CPX-5028">
    <property type="entry name" value="Intraflagellar transport complex B"/>
</dbReference>
<dbReference type="CORUM" id="Q61025"/>
<dbReference type="DIP" id="DIP-60602N"/>
<dbReference type="FunCoup" id="Q61025">
    <property type="interactions" value="235"/>
</dbReference>
<dbReference type="IntAct" id="Q61025">
    <property type="interactions" value="1"/>
</dbReference>
<dbReference type="STRING" id="10090.ENSMUSP00000118015"/>
<dbReference type="TCDB" id="1.X.1.1.3">
    <property type="family name" value="the intraflagellar transporter-a complex (ift-a) family"/>
</dbReference>
<dbReference type="PhosphoSitePlus" id="Q61025"/>
<dbReference type="SwissPalm" id="Q61025"/>
<dbReference type="PaxDb" id="10090-ENSMUSP00000118015"/>
<dbReference type="PeptideAtlas" id="Q61025"/>
<dbReference type="ProteomicsDB" id="267109">
    <molecule id="Q61025-1"/>
</dbReference>
<dbReference type="ProteomicsDB" id="267110">
    <molecule id="Q61025-2"/>
</dbReference>
<dbReference type="Pumba" id="Q61025"/>
<dbReference type="Antibodypedia" id="13983">
    <property type="antibodies" value="124 antibodies from 21 providers"/>
</dbReference>
<dbReference type="Ensembl" id="ENSMUST00000108275.2">
    <molecule id="Q61025-1"/>
    <property type="protein sequence ID" value="ENSMUSP00000103910.2"/>
    <property type="gene ID" value="ENSMUSG00000001105.16"/>
</dbReference>
<dbReference type="Ensembl" id="ENSMUST00000128788.8">
    <molecule id="Q61025-1"/>
    <property type="protein sequence ID" value="ENSMUSP00000118015.2"/>
    <property type="gene ID" value="ENSMUSG00000001105.16"/>
</dbReference>
<dbReference type="GeneID" id="55978"/>
<dbReference type="KEGG" id="mmu:55978"/>
<dbReference type="UCSC" id="uc007kjs.1">
    <molecule id="Q61025-1"/>
    <property type="organism name" value="mouse"/>
</dbReference>
<dbReference type="AGR" id="MGI:1915585"/>
<dbReference type="CTD" id="90410"/>
<dbReference type="MGI" id="MGI:1915585">
    <property type="gene designation" value="Ift20"/>
</dbReference>
<dbReference type="VEuPathDB" id="HostDB:ENSMUSG00000001105"/>
<dbReference type="eggNOG" id="ENOG502RYYR">
    <property type="taxonomic scope" value="Eukaryota"/>
</dbReference>
<dbReference type="GeneTree" id="ENSGT00390000003413"/>
<dbReference type="InParanoid" id="Q61025"/>
<dbReference type="OMA" id="TMAKQRQ"/>
<dbReference type="OrthoDB" id="10254896at2759"/>
<dbReference type="PhylomeDB" id="Q61025"/>
<dbReference type="TreeFam" id="TF319434"/>
<dbReference type="Reactome" id="R-MMU-5620924">
    <property type="pathway name" value="Intraflagellar transport"/>
</dbReference>
<dbReference type="BioGRID-ORCS" id="55978">
    <property type="hits" value="4 hits in 78 CRISPR screens"/>
</dbReference>
<dbReference type="CD-CODE" id="01CA17F3">
    <property type="entry name" value="Centrosome"/>
</dbReference>
<dbReference type="ChiTaRS" id="Ift20">
    <property type="organism name" value="mouse"/>
</dbReference>
<dbReference type="PRO" id="PR:Q61025"/>
<dbReference type="Proteomes" id="UP000000589">
    <property type="component" value="Chromosome 11"/>
</dbReference>
<dbReference type="RNAct" id="Q61025">
    <property type="molecule type" value="protein"/>
</dbReference>
<dbReference type="Bgee" id="ENSMUSG00000001105">
    <property type="expression patterns" value="Expressed in humerus cartilage element and 258 other cell types or tissues"/>
</dbReference>
<dbReference type="ExpressionAtlas" id="Q61025">
    <property type="expression patterns" value="baseline and differential"/>
</dbReference>
<dbReference type="GO" id="GO:0001669">
    <property type="term" value="C:acrosomal vesicle"/>
    <property type="evidence" value="ECO:0000314"/>
    <property type="project" value="UniProtKB"/>
</dbReference>
<dbReference type="GO" id="GO:0005814">
    <property type="term" value="C:centriole"/>
    <property type="evidence" value="ECO:0000314"/>
    <property type="project" value="MGI"/>
</dbReference>
<dbReference type="GO" id="GO:0005813">
    <property type="term" value="C:centrosome"/>
    <property type="evidence" value="ECO:0000314"/>
    <property type="project" value="MGI"/>
</dbReference>
<dbReference type="GO" id="GO:0036064">
    <property type="term" value="C:ciliary basal body"/>
    <property type="evidence" value="ECO:0000314"/>
    <property type="project" value="MGI"/>
</dbReference>
<dbReference type="GO" id="GO:0097546">
    <property type="term" value="C:ciliary base"/>
    <property type="evidence" value="ECO:0000314"/>
    <property type="project" value="MGI"/>
</dbReference>
<dbReference type="GO" id="GO:0005929">
    <property type="term" value="C:cilium"/>
    <property type="evidence" value="ECO:0000314"/>
    <property type="project" value="UniProtKB"/>
</dbReference>
<dbReference type="GO" id="GO:0005801">
    <property type="term" value="C:cis-Golgi network"/>
    <property type="evidence" value="ECO:0007669"/>
    <property type="project" value="Ensembl"/>
</dbReference>
<dbReference type="GO" id="GO:0005737">
    <property type="term" value="C:cytoplasm"/>
    <property type="evidence" value="ECO:0000314"/>
    <property type="project" value="UniProtKB"/>
</dbReference>
<dbReference type="GO" id="GO:0031410">
    <property type="term" value="C:cytoplasmic vesicle"/>
    <property type="evidence" value="ECO:0000314"/>
    <property type="project" value="MGI"/>
</dbReference>
<dbReference type="GO" id="GO:0044292">
    <property type="term" value="C:dendrite terminus"/>
    <property type="evidence" value="ECO:0000314"/>
    <property type="project" value="MGI"/>
</dbReference>
<dbReference type="GO" id="GO:0005794">
    <property type="term" value="C:Golgi apparatus"/>
    <property type="evidence" value="ECO:0000314"/>
    <property type="project" value="UniProtKB"/>
</dbReference>
<dbReference type="GO" id="GO:0030992">
    <property type="term" value="C:intraciliary transport particle B"/>
    <property type="evidence" value="ECO:0000314"/>
    <property type="project" value="UniProtKB"/>
</dbReference>
<dbReference type="GO" id="GO:1902636">
    <property type="term" value="C:kinociliary basal body"/>
    <property type="evidence" value="ECO:0000314"/>
    <property type="project" value="MGI"/>
</dbReference>
<dbReference type="GO" id="GO:0002177">
    <property type="term" value="C:manchette"/>
    <property type="evidence" value="ECO:0000314"/>
    <property type="project" value="UniProtKB"/>
</dbReference>
<dbReference type="GO" id="GO:0005902">
    <property type="term" value="C:microvillus"/>
    <property type="evidence" value="ECO:0000314"/>
    <property type="project" value="MGI"/>
</dbReference>
<dbReference type="GO" id="GO:0031514">
    <property type="term" value="C:motile cilium"/>
    <property type="evidence" value="ECO:0000314"/>
    <property type="project" value="MGI"/>
</dbReference>
<dbReference type="GO" id="GO:0043005">
    <property type="term" value="C:neuron projection"/>
    <property type="evidence" value="ECO:0000314"/>
    <property type="project" value="MGI"/>
</dbReference>
<dbReference type="GO" id="GO:0032391">
    <property type="term" value="C:photoreceptor connecting cilium"/>
    <property type="evidence" value="ECO:0000314"/>
    <property type="project" value="MGI"/>
</dbReference>
<dbReference type="GO" id="GO:0001750">
    <property type="term" value="C:photoreceptor outer segment"/>
    <property type="evidence" value="ECO:0000314"/>
    <property type="project" value="MGI"/>
</dbReference>
<dbReference type="GO" id="GO:0032420">
    <property type="term" value="C:stereocilium"/>
    <property type="evidence" value="ECO:0000314"/>
    <property type="project" value="MGI"/>
</dbReference>
<dbReference type="GO" id="GO:0002046">
    <property type="term" value="F:opsin binding"/>
    <property type="evidence" value="ECO:0000353"/>
    <property type="project" value="MGI"/>
</dbReference>
<dbReference type="GO" id="GO:0031267">
    <property type="term" value="F:small GTPase binding"/>
    <property type="evidence" value="ECO:0007669"/>
    <property type="project" value="Ensembl"/>
</dbReference>
<dbReference type="GO" id="GO:0055007">
    <property type="term" value="P:cardiac muscle cell differentiation"/>
    <property type="evidence" value="ECO:0000315"/>
    <property type="project" value="MGI"/>
</dbReference>
<dbReference type="GO" id="GO:0051642">
    <property type="term" value="P:centrosome localization"/>
    <property type="evidence" value="ECO:0000315"/>
    <property type="project" value="MGI"/>
</dbReference>
<dbReference type="GO" id="GO:0060271">
    <property type="term" value="P:cilium assembly"/>
    <property type="evidence" value="ECO:0000315"/>
    <property type="project" value="MGI"/>
</dbReference>
<dbReference type="GO" id="GO:0090102">
    <property type="term" value="P:cochlea development"/>
    <property type="evidence" value="ECO:0000315"/>
    <property type="project" value="MGI"/>
</dbReference>
<dbReference type="GO" id="GO:0045198">
    <property type="term" value="P:establishment of epithelial cell apical/basal polarity"/>
    <property type="evidence" value="ECO:0000315"/>
    <property type="project" value="MGI"/>
</dbReference>
<dbReference type="GO" id="GO:0001736">
    <property type="term" value="P:establishment of planar polarity"/>
    <property type="evidence" value="ECO:0000315"/>
    <property type="project" value="MGI"/>
</dbReference>
<dbReference type="GO" id="GO:0060122">
    <property type="term" value="P:inner ear receptor cell stereocilium organization"/>
    <property type="evidence" value="ECO:0000315"/>
    <property type="project" value="MGI"/>
</dbReference>
<dbReference type="GO" id="GO:0035720">
    <property type="term" value="P:intraciliary anterograde transport"/>
    <property type="evidence" value="ECO:0000303"/>
    <property type="project" value="ComplexPortal"/>
</dbReference>
<dbReference type="GO" id="GO:0042073">
    <property type="term" value="P:intraciliary transport"/>
    <property type="evidence" value="ECO:0000315"/>
    <property type="project" value="MGI"/>
</dbReference>
<dbReference type="GO" id="GO:0001822">
    <property type="term" value="P:kidney development"/>
    <property type="evidence" value="ECO:0000315"/>
    <property type="project" value="MGI"/>
</dbReference>
<dbReference type="GO" id="GO:0061351">
    <property type="term" value="P:neural precursor cell proliferation"/>
    <property type="evidence" value="ECO:0000315"/>
    <property type="project" value="MGI"/>
</dbReference>
<dbReference type="GO" id="GO:0022008">
    <property type="term" value="P:neurogenesis"/>
    <property type="evidence" value="ECO:0000315"/>
    <property type="project" value="MGI"/>
</dbReference>
<dbReference type="GO" id="GO:0036372">
    <property type="term" value="P:opsin transport"/>
    <property type="evidence" value="ECO:0000315"/>
    <property type="project" value="MGI"/>
</dbReference>
<dbReference type="GO" id="GO:0035845">
    <property type="term" value="P:photoreceptor cell outer segment organization"/>
    <property type="evidence" value="ECO:0000315"/>
    <property type="project" value="MGI"/>
</dbReference>
<dbReference type="GO" id="GO:0045724">
    <property type="term" value="P:positive regulation of cilium assembly"/>
    <property type="evidence" value="ECO:0007669"/>
    <property type="project" value="Ensembl"/>
</dbReference>
<dbReference type="GO" id="GO:0061512">
    <property type="term" value="P:protein localization to cilium"/>
    <property type="evidence" value="ECO:0000315"/>
    <property type="project" value="MGI"/>
</dbReference>
<dbReference type="GO" id="GO:0034067">
    <property type="term" value="P:protein localization to Golgi apparatus"/>
    <property type="evidence" value="ECO:0000266"/>
    <property type="project" value="MGI"/>
</dbReference>
<dbReference type="GO" id="GO:0072659">
    <property type="term" value="P:protein localization to plasma membrane"/>
    <property type="evidence" value="ECO:0000315"/>
    <property type="project" value="MGI"/>
</dbReference>
<dbReference type="GO" id="GO:0071806">
    <property type="term" value="P:protein transmembrane transport"/>
    <property type="evidence" value="ECO:0000315"/>
    <property type="project" value="MGI"/>
</dbReference>
<dbReference type="GO" id="GO:2000785">
    <property type="term" value="P:regulation of autophagosome assembly"/>
    <property type="evidence" value="ECO:0000315"/>
    <property type="project" value="UniProtKB"/>
</dbReference>
<dbReference type="GO" id="GO:0060828">
    <property type="term" value="P:regulation of canonical Wnt signaling pathway"/>
    <property type="evidence" value="ECO:0000315"/>
    <property type="project" value="MGI"/>
</dbReference>
<dbReference type="GO" id="GO:1902017">
    <property type="term" value="P:regulation of cilium assembly"/>
    <property type="evidence" value="ECO:0000315"/>
    <property type="project" value="UniProtKB"/>
</dbReference>
<dbReference type="GO" id="GO:2000583">
    <property type="term" value="P:regulation of platelet-derived growth factor receptor-alpha signaling pathway"/>
    <property type="evidence" value="ECO:0000315"/>
    <property type="project" value="UniProtKB"/>
</dbReference>
<dbReference type="GO" id="GO:0007224">
    <property type="term" value="P:smoothened signaling pathway"/>
    <property type="evidence" value="ECO:0000315"/>
    <property type="project" value="MGI"/>
</dbReference>
<dbReference type="GO" id="GO:0007283">
    <property type="term" value="P:spermatogenesis"/>
    <property type="evidence" value="ECO:0000315"/>
    <property type="project" value="UniProtKB"/>
</dbReference>
<dbReference type="GO" id="GO:0008542">
    <property type="term" value="P:visual learning"/>
    <property type="evidence" value="ECO:0000315"/>
    <property type="project" value="MGI"/>
</dbReference>
<dbReference type="InterPro" id="IPR028172">
    <property type="entry name" value="FT20"/>
</dbReference>
<dbReference type="PANTHER" id="PTHR31978">
    <property type="entry name" value="INTRAFLAGELLAR TRANSPORT PROTEIN 20 HOMOLOG"/>
    <property type="match status" value="1"/>
</dbReference>
<dbReference type="PANTHER" id="PTHR31978:SF1">
    <property type="entry name" value="INTRAFLAGELLAR TRANSPORT PROTEIN 20 HOMOLOG"/>
    <property type="match status" value="1"/>
</dbReference>
<dbReference type="Pfam" id="PF14931">
    <property type="entry name" value="IFT20"/>
    <property type="match status" value="1"/>
</dbReference>
<comment type="function">
    <text evidence="6 10 12 14">Part of intraflagellar transport (IFT) particles involved in ciliary process assembly. May play a role in the trafficking of ciliary membrane proteins from the Golgi complex to the cilium (PubMed:16775004). Regulates the ciliary platelet-derived growth factor receptor-alpha (PDGFRA) signaling pathway. Required for protein stability of E3 ubiquitin ligases CBL and CBLB that mediate ubiquitination and internalization of PDGFRA for proper feedback inhibition of PDGFRA signaling (PubMed:29237719). Essential for male fertility. Plays an important role in spermatogenesis, particularly spermiogenesis, when germ cells form flagella. May play a role in the transport of flagellar proteins ODF2 and SPAG16 to build sperm flagella and in the removal of redundant sperm cytoplasm (PubMed:27682589). Also involved in autophagy since it is required for trafficking of ATG16L and the expansion of the autophagic compartment (PubMed:24089209).</text>
</comment>
<comment type="subunit">
    <text evidence="1 4 6 7 8 9 17 18 19">Component of the IFT complex B, at least composed of IFT20, IFT22, IFT25, IFT27, IFT46, IFT52, TRAF3IP1/IFT54, IFT57, IFT74, IFT80, IFT81, and IFT88 (PubMed:12821668, PubMed:16775004, PubMed:19253336). Interacts directly with IFT57 and KIF3B/Kinesin II subunit (PubMed:12821668). Interacts with IFT88 (PubMed:19253336). Interacts with CEP83 (By similarity). Interacts with SPEF2 (via C-terminus) (PubMed:19889948). Interacts with CBL and CBLB (By similarity). Interacts with TRIP11 (PubMed:19112494). Interacts with TTC21A (By similarity). Interacts with SPATA1 (PubMed:31816150). Interacts with USH1G (By similarity). Interacts with CCDC146 (PubMed:38038747). Interacts with CEP78; regulating IFT20 stability and localization (PubMed:36756949).</text>
</comment>
<comment type="interaction">
    <interactant intactId="EBI-16077253">
        <id>Q61025</id>
    </interactant>
    <interactant intactId="EBI-769195">
        <id>Q8C0J2</id>
        <label>Atg16l1</label>
    </interactant>
    <organismsDiffer>false</organismsDiffer>
    <experiments>2</experiments>
</comment>
<comment type="subcellular location">
    <subcellularLocation>
        <location evidence="6 8 9 13">Golgi apparatus</location>
        <location evidence="6 8 9 13">cis-Golgi network</location>
    </subcellularLocation>
    <subcellularLocation>
        <location evidence="5">Cytoplasm</location>
        <location evidence="5">Cytoskeleton</location>
        <location evidence="5">Microtubule organizing center</location>
        <location evidence="5">Centrosome</location>
        <location evidence="5">Centriole</location>
    </subcellularLocation>
    <subcellularLocation>
        <location evidence="5 6">Cytoplasm</location>
        <location evidence="5 6">Cytoskeleton</location>
        <location evidence="5 6">Cilium basal body</location>
    </subcellularLocation>
    <subcellularLocation>
        <location evidence="11 14 16">Cell projection</location>
        <location evidence="11 14 16">Cilium</location>
    </subcellularLocation>
    <subcellularLocation>
        <location evidence="9 13 15">Cytoplasm</location>
        <location evidence="9 13 15">Cytoskeleton</location>
    </subcellularLocation>
    <subcellularLocation>
        <location evidence="14">Golgi apparatus</location>
    </subcellularLocation>
    <subcellularLocation>
        <location evidence="17">Cytoplasmic vesicle</location>
        <location evidence="17">Secretory vesicle</location>
        <location evidence="17">Acrosome</location>
    </subcellularLocation>
    <subcellularLocation>
        <location evidence="15">Cytoplasm</location>
    </subcellularLocation>
    <text evidence="5 9 13 15">Present at the centrosomes during the cell cycle and associated with the proximal portion of the mother centriole and the lateral aspect of the daughter centriole (PubMed:15337773). Associated with basal body at the base of primary cilia (PubMed:15337773). Detected in the Golgi apparatus of round spermatids and late spermatocytes (PubMed:19889948, PubMed:28619825). Also detected in the manchette of step 10-12 spermatids (PubMed:19889948, PubMed:28619825). In step 14 spermatids, found in the basal body of the sperm tail (PubMed:19889948). Localization in the manchette of elongating spermatids is dependent on SPAG17 (PubMed:29690537).</text>
</comment>
<comment type="alternative products">
    <event type="alternative splicing"/>
    <isoform>
        <id>Q61025-1</id>
        <name>1</name>
        <sequence type="displayed"/>
    </isoform>
    <isoform>
        <id>Q61025-2</id>
        <name>2</name>
        <sequence type="described" ref="VSP_020392"/>
    </isoform>
</comment>
<comment type="tissue specificity">
    <text evidence="3 4 12">Expressed predominantly in the testis (at protein level). Expressed in kidney and retina. Expression is up-regulated during spermiogenesis.</text>
</comment>
<comment type="developmental stage">
    <text evidence="12">Expression is first detected at postnatal day 16 (P16) and increases significantly at days P30 and P42.</text>
</comment>
<comment type="disruption phenotype">
    <text evidence="12">Conditional knockout in male germ cells results in infertility, abnormal sperm morphology, significantly reduced sperm count and sperm mobility.</text>
</comment>
<comment type="miscellaneous">
    <text>Cells that stably express short interference RNAs targeting IFT20 show reduced centriolar IFT20 and lack primary cilia.</text>
</comment>
<comment type="sequence caution" evidence="21">
    <conflict type="erroneous gene model prediction">
        <sequence resource="EMBL-CDS" id="CAI25553"/>
    </conflict>
</comment>
<sequence length="132" mass="15237">MAKDILGEAGLHFDELNKLRVLDPEVTQQTVELKEECKDFVDKIGQFQKIVGGLIELVDQLAKEAENEKMKAIGARNLLKSIAKQREAQQQQLQALIAEKKTQLERYRVEYEALCKVEAEQNEFIDQFIFQK</sequence>
<protein>
    <recommendedName>
        <fullName>Intraflagellar transport protein 20 homolog</fullName>
        <shortName>mIFT20</shortName>
    </recommendedName>
</protein>
<name>IFT20_MOUSE</name>
<organism>
    <name type="scientific">Mus musculus</name>
    <name type="common">Mouse</name>
    <dbReference type="NCBI Taxonomy" id="10090"/>
    <lineage>
        <taxon>Eukaryota</taxon>
        <taxon>Metazoa</taxon>
        <taxon>Chordata</taxon>
        <taxon>Craniata</taxon>
        <taxon>Vertebrata</taxon>
        <taxon>Euteleostomi</taxon>
        <taxon>Mammalia</taxon>
        <taxon>Eutheria</taxon>
        <taxon>Euarchontoglires</taxon>
        <taxon>Glires</taxon>
        <taxon>Rodentia</taxon>
        <taxon>Myomorpha</taxon>
        <taxon>Muroidea</taxon>
        <taxon>Muridae</taxon>
        <taxon>Murinae</taxon>
        <taxon>Mus</taxon>
        <taxon>Mus</taxon>
    </lineage>
</organism>
<reference key="1">
    <citation type="journal article" date="2002" name="J. Cell Biol.">
        <title>The intraflagellar transport protein, IFT88, is essential for vertebrate photoreceptor assembly and maintenance.</title>
        <authorList>
            <person name="Pazour G.J."/>
            <person name="Baker S.A."/>
            <person name="Deane J.A."/>
            <person name="Cole D.G."/>
            <person name="Dickert B.L."/>
            <person name="Rosenbaum J.L."/>
            <person name="Witman G.B."/>
            <person name="Besharse J.C."/>
        </authorList>
    </citation>
    <scope>NUCLEOTIDE SEQUENCE [MRNA] (ISOFORM 1)</scope>
    <scope>TISSUE SPECIFICITY</scope>
    <source>
        <strain>C57BL/6J</strain>
    </source>
</reference>
<reference key="2">
    <citation type="submission" date="1995-10" db="EMBL/GenBank/DDBJ databases">
        <authorList>
            <person name="Das N."/>
            <person name="Dey S.K."/>
        </authorList>
    </citation>
    <scope>NUCLEOTIDE SEQUENCE [MRNA] (ISOFORM 1)</scope>
    <source>
        <strain>CD-1</strain>
        <tissue>Uterus</tissue>
    </source>
</reference>
<reference key="3">
    <citation type="journal article" date="2005" name="Science">
        <title>The transcriptional landscape of the mammalian genome.</title>
        <authorList>
            <person name="Carninci P."/>
            <person name="Kasukawa T."/>
            <person name="Katayama S."/>
            <person name="Gough J."/>
            <person name="Frith M.C."/>
            <person name="Maeda N."/>
            <person name="Oyama R."/>
            <person name="Ravasi T."/>
            <person name="Lenhard B."/>
            <person name="Wells C."/>
            <person name="Kodzius R."/>
            <person name="Shimokawa K."/>
            <person name="Bajic V.B."/>
            <person name="Brenner S.E."/>
            <person name="Batalov S."/>
            <person name="Forrest A.R."/>
            <person name="Zavolan M."/>
            <person name="Davis M.J."/>
            <person name="Wilming L.G."/>
            <person name="Aidinis V."/>
            <person name="Allen J.E."/>
            <person name="Ambesi-Impiombato A."/>
            <person name="Apweiler R."/>
            <person name="Aturaliya R.N."/>
            <person name="Bailey T.L."/>
            <person name="Bansal M."/>
            <person name="Baxter L."/>
            <person name="Beisel K.W."/>
            <person name="Bersano T."/>
            <person name="Bono H."/>
            <person name="Chalk A.M."/>
            <person name="Chiu K.P."/>
            <person name="Choudhary V."/>
            <person name="Christoffels A."/>
            <person name="Clutterbuck D.R."/>
            <person name="Crowe M.L."/>
            <person name="Dalla E."/>
            <person name="Dalrymple B.P."/>
            <person name="de Bono B."/>
            <person name="Della Gatta G."/>
            <person name="di Bernardo D."/>
            <person name="Down T."/>
            <person name="Engstrom P."/>
            <person name="Fagiolini M."/>
            <person name="Faulkner G."/>
            <person name="Fletcher C.F."/>
            <person name="Fukushima T."/>
            <person name="Furuno M."/>
            <person name="Futaki S."/>
            <person name="Gariboldi M."/>
            <person name="Georgii-Hemming P."/>
            <person name="Gingeras T.R."/>
            <person name="Gojobori T."/>
            <person name="Green R.E."/>
            <person name="Gustincich S."/>
            <person name="Harbers M."/>
            <person name="Hayashi Y."/>
            <person name="Hensch T.K."/>
            <person name="Hirokawa N."/>
            <person name="Hill D."/>
            <person name="Huminiecki L."/>
            <person name="Iacono M."/>
            <person name="Ikeo K."/>
            <person name="Iwama A."/>
            <person name="Ishikawa T."/>
            <person name="Jakt M."/>
            <person name="Kanapin A."/>
            <person name="Katoh M."/>
            <person name="Kawasawa Y."/>
            <person name="Kelso J."/>
            <person name="Kitamura H."/>
            <person name="Kitano H."/>
            <person name="Kollias G."/>
            <person name="Krishnan S.P."/>
            <person name="Kruger A."/>
            <person name="Kummerfeld S.K."/>
            <person name="Kurochkin I.V."/>
            <person name="Lareau L.F."/>
            <person name="Lazarevic D."/>
            <person name="Lipovich L."/>
            <person name="Liu J."/>
            <person name="Liuni S."/>
            <person name="McWilliam S."/>
            <person name="Madan Babu M."/>
            <person name="Madera M."/>
            <person name="Marchionni L."/>
            <person name="Matsuda H."/>
            <person name="Matsuzawa S."/>
            <person name="Miki H."/>
            <person name="Mignone F."/>
            <person name="Miyake S."/>
            <person name="Morris K."/>
            <person name="Mottagui-Tabar S."/>
            <person name="Mulder N."/>
            <person name="Nakano N."/>
            <person name="Nakauchi H."/>
            <person name="Ng P."/>
            <person name="Nilsson R."/>
            <person name="Nishiguchi S."/>
            <person name="Nishikawa S."/>
            <person name="Nori F."/>
            <person name="Ohara O."/>
            <person name="Okazaki Y."/>
            <person name="Orlando V."/>
            <person name="Pang K.C."/>
            <person name="Pavan W.J."/>
            <person name="Pavesi G."/>
            <person name="Pesole G."/>
            <person name="Petrovsky N."/>
            <person name="Piazza S."/>
            <person name="Reed J."/>
            <person name="Reid J.F."/>
            <person name="Ring B.Z."/>
            <person name="Ringwald M."/>
            <person name="Rost B."/>
            <person name="Ruan Y."/>
            <person name="Salzberg S.L."/>
            <person name="Sandelin A."/>
            <person name="Schneider C."/>
            <person name="Schoenbach C."/>
            <person name="Sekiguchi K."/>
            <person name="Semple C.A."/>
            <person name="Seno S."/>
            <person name="Sessa L."/>
            <person name="Sheng Y."/>
            <person name="Shibata Y."/>
            <person name="Shimada H."/>
            <person name="Shimada K."/>
            <person name="Silva D."/>
            <person name="Sinclair B."/>
            <person name="Sperling S."/>
            <person name="Stupka E."/>
            <person name="Sugiura K."/>
            <person name="Sultana R."/>
            <person name="Takenaka Y."/>
            <person name="Taki K."/>
            <person name="Tammoja K."/>
            <person name="Tan S.L."/>
            <person name="Tang S."/>
            <person name="Taylor M.S."/>
            <person name="Tegner J."/>
            <person name="Teichmann S.A."/>
            <person name="Ueda H.R."/>
            <person name="van Nimwegen E."/>
            <person name="Verardo R."/>
            <person name="Wei C.L."/>
            <person name="Yagi K."/>
            <person name="Yamanishi H."/>
            <person name="Zabarovsky E."/>
            <person name="Zhu S."/>
            <person name="Zimmer A."/>
            <person name="Hide W."/>
            <person name="Bult C."/>
            <person name="Grimmond S.M."/>
            <person name="Teasdale R.D."/>
            <person name="Liu E.T."/>
            <person name="Brusic V."/>
            <person name="Quackenbush J."/>
            <person name="Wahlestedt C."/>
            <person name="Mattick J.S."/>
            <person name="Hume D.A."/>
            <person name="Kai C."/>
            <person name="Sasaki D."/>
            <person name="Tomaru Y."/>
            <person name="Fukuda S."/>
            <person name="Kanamori-Katayama M."/>
            <person name="Suzuki M."/>
            <person name="Aoki J."/>
            <person name="Arakawa T."/>
            <person name="Iida J."/>
            <person name="Imamura K."/>
            <person name="Itoh M."/>
            <person name="Kato T."/>
            <person name="Kawaji H."/>
            <person name="Kawagashira N."/>
            <person name="Kawashima T."/>
            <person name="Kojima M."/>
            <person name="Kondo S."/>
            <person name="Konno H."/>
            <person name="Nakano K."/>
            <person name="Ninomiya N."/>
            <person name="Nishio T."/>
            <person name="Okada M."/>
            <person name="Plessy C."/>
            <person name="Shibata K."/>
            <person name="Shiraki T."/>
            <person name="Suzuki S."/>
            <person name="Tagami M."/>
            <person name="Waki K."/>
            <person name="Watahiki A."/>
            <person name="Okamura-Oho Y."/>
            <person name="Suzuki H."/>
            <person name="Kawai J."/>
            <person name="Hayashizaki Y."/>
        </authorList>
    </citation>
    <scope>NUCLEOTIDE SEQUENCE [LARGE SCALE MRNA] (ISOFORM 1)</scope>
    <source>
        <strain>C57BL/6J</strain>
        <tissue>Egg</tissue>
        <tissue>Kidney</tissue>
    </source>
</reference>
<reference key="4">
    <citation type="journal article" date="2009" name="PLoS Biol.">
        <title>Lineage-specific biology revealed by a finished genome assembly of the mouse.</title>
        <authorList>
            <person name="Church D.M."/>
            <person name="Goodstadt L."/>
            <person name="Hillier L.W."/>
            <person name="Zody M.C."/>
            <person name="Goldstein S."/>
            <person name="She X."/>
            <person name="Bult C.J."/>
            <person name="Agarwala R."/>
            <person name="Cherry J.L."/>
            <person name="DiCuccio M."/>
            <person name="Hlavina W."/>
            <person name="Kapustin Y."/>
            <person name="Meric P."/>
            <person name="Maglott D."/>
            <person name="Birtle Z."/>
            <person name="Marques A.C."/>
            <person name="Graves T."/>
            <person name="Zhou S."/>
            <person name="Teague B."/>
            <person name="Potamousis K."/>
            <person name="Churas C."/>
            <person name="Place M."/>
            <person name="Herschleb J."/>
            <person name="Runnheim R."/>
            <person name="Forrest D."/>
            <person name="Amos-Landgraf J."/>
            <person name="Schwartz D.C."/>
            <person name="Cheng Z."/>
            <person name="Lindblad-Toh K."/>
            <person name="Eichler E.E."/>
            <person name="Ponting C.P."/>
        </authorList>
    </citation>
    <scope>NUCLEOTIDE SEQUENCE [LARGE SCALE GENOMIC DNA]</scope>
    <source>
        <strain>C57BL/6J</strain>
    </source>
</reference>
<reference key="5">
    <citation type="journal article" date="2004" name="Genome Res.">
        <title>The status, quality, and expansion of the NIH full-length cDNA project: the Mammalian Gene Collection (MGC).</title>
        <authorList>
            <consortium name="The MGC Project Team"/>
        </authorList>
    </citation>
    <scope>NUCLEOTIDE SEQUENCE [LARGE SCALE MRNA] (ISOFORM 2)</scope>
    <source>
        <strain>Czech II</strain>
        <tissue>Mammary gland</tissue>
    </source>
</reference>
<reference key="6">
    <citation type="journal article" date="2003" name="J. Biol. Chem.">
        <title>IFT20 links kinesin II with a mammalian intraflagellar transport complex that is conserved in motile flagella and sensory cilia.</title>
        <authorList>
            <person name="Baker S.A."/>
            <person name="Freeman K."/>
            <person name="Luby-Phelps K."/>
            <person name="Pazour G.J."/>
            <person name="Besharse J.C."/>
        </authorList>
    </citation>
    <scope>TISSUE SPECIFICITY</scope>
    <scope>SUBUNIT</scope>
    <scope>INTERACTION WITH IFT57 AND KIF3B</scope>
    <scope>REGION</scope>
</reference>
<reference key="7">
    <citation type="journal article" date="2004" name="J. Cell Biol.">
        <title>Pericentrin forms a complex with intraflagellar transport proteins and polycystin-2 and is required for primary cilia assembly.</title>
        <authorList>
            <person name="Jurczyk A."/>
            <person name="Gromley A."/>
            <person name="Redick S."/>
            <person name="San Agustin J."/>
            <person name="Witman G."/>
            <person name="Pazour G.J."/>
            <person name="Peters D.J.M."/>
            <person name="Doxsey S."/>
        </authorList>
    </citation>
    <scope>SUBCELLULAR LOCATION</scope>
</reference>
<reference key="8">
    <citation type="journal article" date="2006" name="Mol. Biol. Cell">
        <title>The intraflagellar transport protein IFT20 is associated with the Golgi complex and is required for cilia assembly.</title>
        <authorList>
            <person name="Follit J.A."/>
            <person name="Tuft R.A."/>
            <person name="Fogarty K.E."/>
            <person name="Pazour G.J."/>
        </authorList>
    </citation>
    <scope>FUNCTION</scope>
    <scope>SUBUNIT</scope>
    <scope>SUBCELLULAR LOCATION</scope>
</reference>
<reference key="9">
    <citation type="journal article" date="2008" name="PLoS Genet.">
        <title>The Golgin GMAP210/TRIP11 anchors IFT20 to the Golgi complex.</title>
        <authorList>
            <person name="Follit J.A."/>
            <person name="San Agustin J.T."/>
            <person name="Xu F."/>
            <person name="Jonassen J.A."/>
            <person name="Samtani R."/>
            <person name="Lo C.W."/>
            <person name="Pazour G.J."/>
        </authorList>
    </citation>
    <scope>INTERACTION WITH TRIP11</scope>
</reference>
<reference key="10">
    <citation type="journal article" date="2009" name="Cell Motil. Cytoskeleton">
        <title>Characterization of mouse IFT complex B.</title>
        <authorList>
            <person name="Follit J.A."/>
            <person name="Xu F."/>
            <person name="Keady B.T."/>
            <person name="Pazour G.J."/>
        </authorList>
    </citation>
    <scope>IDENTIFICATION IN THE IFT COMPLEX B</scope>
    <scope>INTERACTION WITH IFT88</scope>
    <scope>SUBCELLULAR LOCATION</scope>
</reference>
<reference key="11">
    <citation type="journal article" date="2010" name="Biol. Reprod.">
        <title>Expression of SPEF2 during mouse spermatogenesis and identification of IFT20 as an interacting protein.</title>
        <authorList>
            <person name="Sironen A."/>
            <person name="Hansen J."/>
            <person name="Thomsen B."/>
            <person name="Andersson M."/>
            <person name="Vilkki J."/>
            <person name="Toppari J."/>
            <person name="Kotaja N."/>
        </authorList>
    </citation>
    <scope>INTERACTION WITH SPEF2</scope>
    <scope>SUBCELLULAR LOCATION</scope>
    <scope>TISSUE SPECIFICITY</scope>
</reference>
<reference key="12">
    <citation type="journal article" date="2010" name="Cell">
        <title>A tissue-specific atlas of mouse protein phosphorylation and expression.</title>
        <authorList>
            <person name="Huttlin E.L."/>
            <person name="Jedrychowski M.P."/>
            <person name="Elias J.E."/>
            <person name="Goswami T."/>
            <person name="Rad R."/>
            <person name="Beausoleil S.A."/>
            <person name="Villen J."/>
            <person name="Haas W."/>
            <person name="Sowa M.E."/>
            <person name="Gygi S.P."/>
        </authorList>
    </citation>
    <scope>IDENTIFICATION BY MASS SPECTROMETRY [LARGE SCALE ANALYSIS]</scope>
    <source>
        <tissue>Kidney</tissue>
        <tissue>Liver</tissue>
        <tissue>Lung</tissue>
        <tissue>Pancreas</tissue>
        <tissue>Testis</tissue>
    </source>
</reference>
<reference key="13">
    <citation type="journal article" date="2013" name="Nature">
        <title>Functional interaction between autophagy and ciliogenesis.</title>
        <authorList>
            <person name="Pampliega O."/>
            <person name="Orhon I."/>
            <person name="Patel B."/>
            <person name="Sridhar S."/>
            <person name="Diaz-Carretero A."/>
            <person name="Beau I."/>
            <person name="Codogno P."/>
            <person name="Satir B.H."/>
            <person name="Satir P."/>
            <person name="Cuervo A.M."/>
        </authorList>
    </citation>
    <scope>FUNCTION</scope>
</reference>
<reference key="14">
    <citation type="journal article" date="2014" name="PLoS ONE">
        <title>Regulation of cilium length and intraflagellar transport by the RCK-kinases ICK and MOK in renal epithelial cells.</title>
        <authorList>
            <person name="Broekhuis J.R."/>
            <person name="Verhey K.J."/>
            <person name="Jansen G."/>
        </authorList>
    </citation>
    <scope>SUBCELLULAR LOCATION</scope>
</reference>
<reference key="15">
    <citation type="journal article" date="2016" name="Mol. Biol. Cell">
        <title>Intraflagellar transport protein IFT20 is essential for male fertility and spermiogenesis in mice.</title>
        <authorList>
            <person name="Zhang Z."/>
            <person name="Li W."/>
            <person name="Zhang Y."/>
            <person name="Zhang L."/>
            <person name="Teves M.E."/>
            <person name="Liu H."/>
            <person name="Strauss J.F. III"/>
            <person name="Pazour G.J."/>
            <person name="Foster J.A."/>
            <person name="Hess R.A."/>
            <person name="Zhang Z."/>
        </authorList>
    </citation>
    <scope>FUNCTION</scope>
    <scope>DISRUPTION PHENOTYPE</scope>
    <scope>TISSUE SPECIFICITY</scope>
    <scope>DEVELOPMENTAL STAGE</scope>
</reference>
<reference key="16">
    <citation type="journal article" date="2017" name="Development">
        <title>SPEF2 functions in microtubule-mediated transport in elongating spermatids to ensure proper male germ cell differentiation.</title>
        <authorList>
            <person name="Lehti M.S."/>
            <person name="Zhang F.P."/>
            <person name="Kotaja N."/>
            <person name="Sironen A."/>
        </authorList>
    </citation>
    <scope>SUBCELLULAR LOCATION</scope>
</reference>
<reference key="17">
    <citation type="journal article" date="2018" name="J. Cell Biol.">
        <title>IFT20 modulates ciliary PDGFRalpha signaling by regulating the stability of Cbl E3 ubiquitin ligases.</title>
        <authorList>
            <person name="Schmid F.M."/>
            <person name="Schou K.B."/>
            <person name="Vilhelm M.J."/>
            <person name="Holm M.S."/>
            <person name="Breslin L."/>
            <person name="Farinelli P."/>
            <person name="Larsen L.A."/>
            <person name="Andersen J.S."/>
            <person name="Pedersen L.B."/>
            <person name="Christensen S.T."/>
        </authorList>
    </citation>
    <scope>FUNCTION</scope>
    <scope>SUBCELLULAR LOCATION</scope>
</reference>
<reference key="18">
    <citation type="journal article" date="2018" name="Int. J. Mol. Sci.">
        <title>SPAG17 Is Required for Male Germ Cell Differentiation and Fertility.</title>
        <authorList>
            <person name="Kazarian E."/>
            <person name="Son H."/>
            <person name="Sapao P."/>
            <person name="Li W."/>
            <person name="Zhang Z."/>
            <person name="Strauss J.F."/>
            <person name="Teves M.E."/>
        </authorList>
    </citation>
    <scope>SUBCELLULAR LOCATION</scope>
</reference>
<reference key="19">
    <citation type="journal article" date="2019" name="Front. Cell Dev. Biol.">
        <title>SANS (USH1G) Molecularly Links the Human Usher Syndrome Protein Network to the Intraflagellar Transport Module by Direct Binding to IFT-B Proteins.</title>
        <authorList>
            <person name="Sorusch N."/>
            <person name="Yildirim A."/>
            <person name="Knapp B."/>
            <person name="Janson J."/>
            <person name="Fleck W."/>
            <person name="Scharf C."/>
            <person name="Wolfrum U."/>
        </authorList>
    </citation>
    <scope>SUBCELLULAR LOCATION</scope>
</reference>
<reference key="20">
    <citation type="journal article" date="2020" name="Dev. Dyn.">
        <title>Mouse spermatogenesis-associated protein 1 (SPATA1), an IFT20 binding partner, is an acrosomal protein.</title>
        <authorList>
            <person name="Zhang L."/>
            <person name="Zhen J."/>
            <person name="Huang Q."/>
            <person name="Liu H."/>
            <person name="Li W."/>
            <person name="Zhang S."/>
            <person name="Min J."/>
            <person name="Li Y."/>
            <person name="Shi L."/>
            <person name="Woods J."/>
            <person name="Chen X."/>
            <person name="Shi Y."/>
            <person name="Liu Y."/>
            <person name="Hess R.A."/>
            <person name="Song S."/>
            <person name="Zhang Z."/>
        </authorList>
    </citation>
    <scope>SUBCELLULAR LOCATION</scope>
    <scope>INTERACTION WITH SPATA1</scope>
</reference>
<reference key="21">
    <citation type="journal article" date="2023" name="Cell. Mol. Life Sci.">
        <title>CCDC146 is required for sperm flagellum biogenesis and male fertility in mice.</title>
        <authorList>
            <person name="Ma Y."/>
            <person name="Wu B."/>
            <person name="Chen Y."/>
            <person name="Ma S."/>
            <person name="Wang L."/>
            <person name="Han T."/>
            <person name="Lin X."/>
            <person name="Yang F."/>
            <person name="Liu C."/>
            <person name="Zhao J."/>
            <person name="Li W."/>
        </authorList>
    </citation>
    <scope>INTERACTION WITH CCDC146</scope>
</reference>
<reference key="22">
    <citation type="journal article" date="2023" name="Elife">
        <title>Absence of CEP78 causes photoreceptor and sperm flagella impairments in mice and a human individual.</title>
        <authorList>
            <person name="Zhu T."/>
            <person name="Zhang Y."/>
            <person name="Sheng X."/>
            <person name="Zhang X."/>
            <person name="Chen Y."/>
            <person name="Zhu H."/>
            <person name="Guo Y."/>
            <person name="Qi Y."/>
            <person name="Zhao Y."/>
            <person name="Zhou Q."/>
            <person name="Chen X."/>
            <person name="Guo X."/>
            <person name="Zhao C."/>
        </authorList>
    </citation>
    <scope>INTERACTION WITH CEP78</scope>
</reference>
<feature type="chain" id="PRO_0000249304" description="Intraflagellar transport protein 20 homolog">
    <location>
        <begin position="1"/>
        <end position="132"/>
    </location>
</feature>
<feature type="region of interest" description="IFT57-binding">
    <location>
        <begin position="70"/>
        <end position="132"/>
    </location>
</feature>
<feature type="coiled-coil region" evidence="2">
    <location>
        <begin position="74"/>
        <end position="116"/>
    </location>
</feature>
<feature type="splice variant" id="VSP_020392" description="In isoform 2." evidence="20">
    <location>
        <begin position="107"/>
        <end position="132"/>
    </location>
</feature>
<evidence type="ECO:0000250" key="1">
    <source>
        <dbReference type="UniProtKB" id="Q8IY31"/>
    </source>
</evidence>
<evidence type="ECO:0000255" key="2"/>
<evidence type="ECO:0000269" key="3">
    <source>
    </source>
</evidence>
<evidence type="ECO:0000269" key="4">
    <source>
    </source>
</evidence>
<evidence type="ECO:0000269" key="5">
    <source>
    </source>
</evidence>
<evidence type="ECO:0000269" key="6">
    <source>
    </source>
</evidence>
<evidence type="ECO:0000269" key="7">
    <source>
    </source>
</evidence>
<evidence type="ECO:0000269" key="8">
    <source>
    </source>
</evidence>
<evidence type="ECO:0000269" key="9">
    <source>
    </source>
</evidence>
<evidence type="ECO:0000269" key="10">
    <source>
    </source>
</evidence>
<evidence type="ECO:0000269" key="11">
    <source>
    </source>
</evidence>
<evidence type="ECO:0000269" key="12">
    <source>
    </source>
</evidence>
<evidence type="ECO:0000269" key="13">
    <source>
    </source>
</evidence>
<evidence type="ECO:0000269" key="14">
    <source>
    </source>
</evidence>
<evidence type="ECO:0000269" key="15">
    <source>
    </source>
</evidence>
<evidence type="ECO:0000269" key="16">
    <source>
    </source>
</evidence>
<evidence type="ECO:0000269" key="17">
    <source>
    </source>
</evidence>
<evidence type="ECO:0000269" key="18">
    <source>
    </source>
</evidence>
<evidence type="ECO:0000269" key="19">
    <source>
    </source>
</evidence>
<evidence type="ECO:0000303" key="20">
    <source>
    </source>
</evidence>
<evidence type="ECO:0000305" key="21"/>
<proteinExistence type="evidence at protein level"/>
<gene>
    <name type="primary">Ift20</name>
</gene>
<keyword id="KW-0025">Alternative splicing</keyword>
<keyword id="KW-0966">Cell projection</keyword>
<keyword id="KW-0969">Cilium</keyword>
<keyword id="KW-0970">Cilium biogenesis/degradation</keyword>
<keyword id="KW-0175">Coiled coil</keyword>
<keyword id="KW-0963">Cytoplasm</keyword>
<keyword id="KW-0968">Cytoplasmic vesicle</keyword>
<keyword id="KW-0206">Cytoskeleton</keyword>
<keyword id="KW-0221">Differentiation</keyword>
<keyword id="KW-0333">Golgi apparatus</keyword>
<keyword id="KW-1185">Reference proteome</keyword>
<keyword id="KW-0744">Spermatogenesis</keyword>
<accession>Q61025</accession>
<accession>Q5SYG9</accession>
<accession>Q99M35</accession>